<name>BIOF_AERHH</name>
<sequence length="398" mass="41976">MKGSAVTGPFGLSAALSEREQAGLLRSRIATDGASGGRLRVAGRDYLNFSANDYLGLAGHSAIKTAFQGGIDRYGAGAGASPLVTGYSRAHQQLEETLADWLGVEAVLLFNCGFSANQAVLKALLGKDHLLWQDKLNHASLQEMGSQLPCKMKRFGHNDMTALERQLEPNRGLIVSEGVFSMDGDQGSWRELAALAAQSGNWLMIDDAHGLGVLGSEGRGTLAAQGVAPASVHIQMGTFGKALGVAGAFVGGSRELVDYLVNFARHYVYSTHMPAAQACAVSQSIELVRAADEARAHLGQLITRFRQGAQALGWQLGASDTPIQPLLVGESGAALQLAERLRECGVWAGAIRPPTVPVGTARLRITLSAAHREQDVDRLLEALGPRPSTDERGGAHGA</sequence>
<feature type="chain" id="PRO_0000380887" description="8-amino-7-oxononanoate synthase">
    <location>
        <begin position="1"/>
        <end position="398"/>
    </location>
</feature>
<feature type="binding site" evidence="1">
    <location>
        <position position="26"/>
    </location>
    <ligand>
        <name>substrate</name>
    </ligand>
</feature>
<feature type="binding site" evidence="1">
    <location>
        <begin position="113"/>
        <end position="114"/>
    </location>
    <ligand>
        <name>pyridoxal 5'-phosphate</name>
        <dbReference type="ChEBI" id="CHEBI:597326"/>
    </ligand>
</feature>
<feature type="binding site" evidence="1">
    <location>
        <position position="138"/>
    </location>
    <ligand>
        <name>substrate</name>
    </ligand>
</feature>
<feature type="binding site" evidence="1">
    <location>
        <position position="181"/>
    </location>
    <ligand>
        <name>pyridoxal 5'-phosphate</name>
        <dbReference type="ChEBI" id="CHEBI:597326"/>
    </ligand>
</feature>
<feature type="binding site" evidence="1">
    <location>
        <position position="209"/>
    </location>
    <ligand>
        <name>pyridoxal 5'-phosphate</name>
        <dbReference type="ChEBI" id="CHEBI:597326"/>
    </ligand>
</feature>
<feature type="binding site" evidence="1">
    <location>
        <position position="238"/>
    </location>
    <ligand>
        <name>pyridoxal 5'-phosphate</name>
        <dbReference type="ChEBI" id="CHEBI:597326"/>
    </ligand>
</feature>
<feature type="binding site" evidence="1">
    <location>
        <position position="355"/>
    </location>
    <ligand>
        <name>substrate</name>
    </ligand>
</feature>
<feature type="modified residue" description="N6-(pyridoxal phosphate)lysine" evidence="1">
    <location>
        <position position="241"/>
    </location>
</feature>
<reference key="1">
    <citation type="journal article" date="2006" name="J. Bacteriol.">
        <title>Genome sequence of Aeromonas hydrophila ATCC 7966T: jack of all trades.</title>
        <authorList>
            <person name="Seshadri R."/>
            <person name="Joseph S.W."/>
            <person name="Chopra A.K."/>
            <person name="Sha J."/>
            <person name="Shaw J."/>
            <person name="Graf J."/>
            <person name="Haft D.H."/>
            <person name="Wu M."/>
            <person name="Ren Q."/>
            <person name="Rosovitz M.J."/>
            <person name="Madupu R."/>
            <person name="Tallon L."/>
            <person name="Kim M."/>
            <person name="Jin S."/>
            <person name="Vuong H."/>
            <person name="Stine O.C."/>
            <person name="Ali A."/>
            <person name="Horneman A.J."/>
            <person name="Heidelberg J.F."/>
        </authorList>
    </citation>
    <scope>NUCLEOTIDE SEQUENCE [LARGE SCALE GENOMIC DNA]</scope>
    <source>
        <strain>ATCC 7966 / DSM 30187 / BCRC 13018 / CCUG 14551 / JCM 1027 / KCTC 2358 / NCIMB 9240 / NCTC 8049</strain>
    </source>
</reference>
<accession>A0KIC7</accession>
<organism>
    <name type="scientific">Aeromonas hydrophila subsp. hydrophila (strain ATCC 7966 / DSM 30187 / BCRC 13018 / CCUG 14551 / JCM 1027 / KCTC 2358 / NCIMB 9240 / NCTC 8049)</name>
    <dbReference type="NCBI Taxonomy" id="380703"/>
    <lineage>
        <taxon>Bacteria</taxon>
        <taxon>Pseudomonadati</taxon>
        <taxon>Pseudomonadota</taxon>
        <taxon>Gammaproteobacteria</taxon>
        <taxon>Aeromonadales</taxon>
        <taxon>Aeromonadaceae</taxon>
        <taxon>Aeromonas</taxon>
    </lineage>
</organism>
<gene>
    <name evidence="1" type="primary">bioF</name>
    <name type="ordered locus">AHA_1490</name>
</gene>
<protein>
    <recommendedName>
        <fullName evidence="1">8-amino-7-oxononanoate synthase</fullName>
        <shortName evidence="1">AONS</shortName>
        <ecNumber evidence="1">2.3.1.47</ecNumber>
    </recommendedName>
    <alternativeName>
        <fullName evidence="1">7-keto-8-amino-pelargonic acid synthase</fullName>
        <shortName evidence="1">7-KAP synthase</shortName>
        <shortName evidence="1">KAPA synthase</shortName>
    </alternativeName>
    <alternativeName>
        <fullName evidence="1">8-amino-7-ketopelargonate synthase</fullName>
    </alternativeName>
</protein>
<evidence type="ECO:0000255" key="1">
    <source>
        <dbReference type="HAMAP-Rule" id="MF_01693"/>
    </source>
</evidence>
<comment type="function">
    <text evidence="1">Catalyzes the decarboxylative condensation of pimeloyl-[acyl-carrier protein] and L-alanine to produce 8-amino-7-oxononanoate (AON), [acyl-carrier protein], and carbon dioxide.</text>
</comment>
<comment type="catalytic activity">
    <reaction evidence="1">
        <text>6-carboxyhexanoyl-[ACP] + L-alanine + H(+) = (8S)-8-amino-7-oxononanoate + holo-[ACP] + CO2</text>
        <dbReference type="Rhea" id="RHEA:42288"/>
        <dbReference type="Rhea" id="RHEA-COMP:9685"/>
        <dbReference type="Rhea" id="RHEA-COMP:9955"/>
        <dbReference type="ChEBI" id="CHEBI:15378"/>
        <dbReference type="ChEBI" id="CHEBI:16526"/>
        <dbReference type="ChEBI" id="CHEBI:57972"/>
        <dbReference type="ChEBI" id="CHEBI:64479"/>
        <dbReference type="ChEBI" id="CHEBI:78846"/>
        <dbReference type="ChEBI" id="CHEBI:149468"/>
        <dbReference type="EC" id="2.3.1.47"/>
    </reaction>
</comment>
<comment type="cofactor">
    <cofactor evidence="1">
        <name>pyridoxal 5'-phosphate</name>
        <dbReference type="ChEBI" id="CHEBI:597326"/>
    </cofactor>
</comment>
<comment type="pathway">
    <text evidence="1">Cofactor biosynthesis; biotin biosynthesis.</text>
</comment>
<comment type="subunit">
    <text evidence="1">Homodimer.</text>
</comment>
<comment type="similarity">
    <text evidence="1">Belongs to the class-II pyridoxal-phosphate-dependent aminotransferase family. BioF subfamily.</text>
</comment>
<proteinExistence type="inferred from homology"/>
<keyword id="KW-0093">Biotin biosynthesis</keyword>
<keyword id="KW-0663">Pyridoxal phosphate</keyword>
<keyword id="KW-1185">Reference proteome</keyword>
<keyword id="KW-0808">Transferase</keyword>
<dbReference type="EC" id="2.3.1.47" evidence="1"/>
<dbReference type="EMBL" id="CP000462">
    <property type="protein sequence ID" value="ABK36908.1"/>
    <property type="molecule type" value="Genomic_DNA"/>
</dbReference>
<dbReference type="RefSeq" id="WP_011705388.1">
    <property type="nucleotide sequence ID" value="NC_008570.1"/>
</dbReference>
<dbReference type="RefSeq" id="YP_856028.1">
    <property type="nucleotide sequence ID" value="NC_008570.1"/>
</dbReference>
<dbReference type="SMR" id="A0KIC7"/>
<dbReference type="STRING" id="380703.AHA_1490"/>
<dbReference type="EnsemblBacteria" id="ABK36908">
    <property type="protein sequence ID" value="ABK36908"/>
    <property type="gene ID" value="AHA_1490"/>
</dbReference>
<dbReference type="GeneID" id="4487691"/>
<dbReference type="KEGG" id="aha:AHA_1490"/>
<dbReference type="PATRIC" id="fig|380703.7.peg.1501"/>
<dbReference type="eggNOG" id="COG0156">
    <property type="taxonomic scope" value="Bacteria"/>
</dbReference>
<dbReference type="HOGENOM" id="CLU_015846_11_2_6"/>
<dbReference type="OrthoDB" id="9807157at2"/>
<dbReference type="UniPathway" id="UPA00078"/>
<dbReference type="Proteomes" id="UP000000756">
    <property type="component" value="Chromosome"/>
</dbReference>
<dbReference type="GO" id="GO:0008710">
    <property type="term" value="F:8-amino-7-oxononanoate synthase activity"/>
    <property type="evidence" value="ECO:0007669"/>
    <property type="project" value="UniProtKB-UniRule"/>
</dbReference>
<dbReference type="GO" id="GO:0030170">
    <property type="term" value="F:pyridoxal phosphate binding"/>
    <property type="evidence" value="ECO:0007669"/>
    <property type="project" value="UniProtKB-UniRule"/>
</dbReference>
<dbReference type="GO" id="GO:0009102">
    <property type="term" value="P:biotin biosynthetic process"/>
    <property type="evidence" value="ECO:0007669"/>
    <property type="project" value="UniProtKB-UniRule"/>
</dbReference>
<dbReference type="CDD" id="cd06454">
    <property type="entry name" value="KBL_like"/>
    <property type="match status" value="1"/>
</dbReference>
<dbReference type="Gene3D" id="3.90.1150.10">
    <property type="entry name" value="Aspartate Aminotransferase, domain 1"/>
    <property type="match status" value="1"/>
</dbReference>
<dbReference type="Gene3D" id="3.40.640.10">
    <property type="entry name" value="Type I PLP-dependent aspartate aminotransferase-like (Major domain)"/>
    <property type="match status" value="1"/>
</dbReference>
<dbReference type="HAMAP" id="MF_01693">
    <property type="entry name" value="BioF_aminotrans_2"/>
    <property type="match status" value="1"/>
</dbReference>
<dbReference type="InterPro" id="IPR001917">
    <property type="entry name" value="Aminotrans_II_pyridoxalP_BS"/>
</dbReference>
<dbReference type="InterPro" id="IPR004839">
    <property type="entry name" value="Aminotransferase_I/II_large"/>
</dbReference>
<dbReference type="InterPro" id="IPR050087">
    <property type="entry name" value="AON_synthase_class-II"/>
</dbReference>
<dbReference type="InterPro" id="IPR004723">
    <property type="entry name" value="AONS_Archaea/Proteobacteria"/>
</dbReference>
<dbReference type="InterPro" id="IPR022834">
    <property type="entry name" value="AONS_Proteobacteria"/>
</dbReference>
<dbReference type="InterPro" id="IPR015424">
    <property type="entry name" value="PyrdxlP-dep_Trfase"/>
</dbReference>
<dbReference type="InterPro" id="IPR015421">
    <property type="entry name" value="PyrdxlP-dep_Trfase_major"/>
</dbReference>
<dbReference type="InterPro" id="IPR015422">
    <property type="entry name" value="PyrdxlP-dep_Trfase_small"/>
</dbReference>
<dbReference type="NCBIfam" id="TIGR00858">
    <property type="entry name" value="bioF"/>
    <property type="match status" value="1"/>
</dbReference>
<dbReference type="PANTHER" id="PTHR13693:SF100">
    <property type="entry name" value="8-AMINO-7-OXONONANOATE SYNTHASE"/>
    <property type="match status" value="1"/>
</dbReference>
<dbReference type="PANTHER" id="PTHR13693">
    <property type="entry name" value="CLASS II AMINOTRANSFERASE/8-AMINO-7-OXONONANOATE SYNTHASE"/>
    <property type="match status" value="1"/>
</dbReference>
<dbReference type="Pfam" id="PF00155">
    <property type="entry name" value="Aminotran_1_2"/>
    <property type="match status" value="1"/>
</dbReference>
<dbReference type="SUPFAM" id="SSF53383">
    <property type="entry name" value="PLP-dependent transferases"/>
    <property type="match status" value="1"/>
</dbReference>
<dbReference type="PROSITE" id="PS00599">
    <property type="entry name" value="AA_TRANSFER_CLASS_2"/>
    <property type="match status" value="1"/>
</dbReference>